<protein>
    <recommendedName>
        <fullName>LIM and senescent cell antigen-like-containing domain protein 3</fullName>
    </recommendedName>
    <alternativeName>
        <fullName>Particularly interesting new Cys-His protein 3</fullName>
        <shortName>PINCH-3</shortName>
    </alternativeName>
</protein>
<accession>P0CW19</accession>
<accession>A0A0A6YYD2</accession>
<accession>B4DPH6</accession>
<accession>Q9HB10</accession>
<name>LIMS3_HUMAN</name>
<sequence length="117" mass="13251">MAFSGRARPCIIPENEEIPRAALNTVHEANGTEDERAVSKLQRRHSDVKVYKEFCDFYAKFNMANALASATCERCKGGFAPAETIVNSNGELYHEQCFVCAQCFQQFPEGLFYEERT</sequence>
<organism>
    <name type="scientific">Homo sapiens</name>
    <name type="common">Human</name>
    <dbReference type="NCBI Taxonomy" id="9606"/>
    <lineage>
        <taxon>Eukaryota</taxon>
        <taxon>Metazoa</taxon>
        <taxon>Chordata</taxon>
        <taxon>Craniata</taxon>
        <taxon>Vertebrata</taxon>
        <taxon>Euteleostomi</taxon>
        <taxon>Mammalia</taxon>
        <taxon>Eutheria</taxon>
        <taxon>Euarchontoglires</taxon>
        <taxon>Primates</taxon>
        <taxon>Haplorrhini</taxon>
        <taxon>Catarrhini</taxon>
        <taxon>Hominidae</taxon>
        <taxon>Homo</taxon>
    </lineage>
</organism>
<reference key="1">
    <citation type="submission" date="2000-07" db="EMBL/GenBank/DDBJ databases">
        <title>A new pinch protein of human testis.</title>
        <authorList>
            <person name="Sha J.H."/>
            <person name="Li J.M."/>
            <person name="Zhou Z.M."/>
        </authorList>
    </citation>
    <scope>NUCLEOTIDE SEQUENCE [MRNA] (ISOFORM 1)</scope>
    <scope>TISSUE SPECIFICITY</scope>
    <source>
        <tissue>Testis</tissue>
    </source>
</reference>
<reference key="2">
    <citation type="journal article" date="2004" name="Nat. Genet.">
        <title>Complete sequencing and characterization of 21,243 full-length human cDNAs.</title>
        <authorList>
            <person name="Ota T."/>
            <person name="Suzuki Y."/>
            <person name="Nishikawa T."/>
            <person name="Otsuki T."/>
            <person name="Sugiyama T."/>
            <person name="Irie R."/>
            <person name="Wakamatsu A."/>
            <person name="Hayashi K."/>
            <person name="Sato H."/>
            <person name="Nagai K."/>
            <person name="Kimura K."/>
            <person name="Makita H."/>
            <person name="Sekine M."/>
            <person name="Obayashi M."/>
            <person name="Nishi T."/>
            <person name="Shibahara T."/>
            <person name="Tanaka T."/>
            <person name="Ishii S."/>
            <person name="Yamamoto J."/>
            <person name="Saito K."/>
            <person name="Kawai Y."/>
            <person name="Isono Y."/>
            <person name="Nakamura Y."/>
            <person name="Nagahari K."/>
            <person name="Murakami K."/>
            <person name="Yasuda T."/>
            <person name="Iwayanagi T."/>
            <person name="Wagatsuma M."/>
            <person name="Shiratori A."/>
            <person name="Sudo H."/>
            <person name="Hosoiri T."/>
            <person name="Kaku Y."/>
            <person name="Kodaira H."/>
            <person name="Kondo H."/>
            <person name="Sugawara M."/>
            <person name="Takahashi M."/>
            <person name="Kanda K."/>
            <person name="Yokoi T."/>
            <person name="Furuya T."/>
            <person name="Kikkawa E."/>
            <person name="Omura Y."/>
            <person name="Abe K."/>
            <person name="Kamihara K."/>
            <person name="Katsuta N."/>
            <person name="Sato K."/>
            <person name="Tanikawa M."/>
            <person name="Yamazaki M."/>
            <person name="Ninomiya K."/>
            <person name="Ishibashi T."/>
            <person name="Yamashita H."/>
            <person name="Murakawa K."/>
            <person name="Fujimori K."/>
            <person name="Tanai H."/>
            <person name="Kimata M."/>
            <person name="Watanabe M."/>
            <person name="Hiraoka S."/>
            <person name="Chiba Y."/>
            <person name="Ishida S."/>
            <person name="Ono Y."/>
            <person name="Takiguchi S."/>
            <person name="Watanabe S."/>
            <person name="Yosida M."/>
            <person name="Hotuta T."/>
            <person name="Kusano J."/>
            <person name="Kanehori K."/>
            <person name="Takahashi-Fujii A."/>
            <person name="Hara H."/>
            <person name="Tanase T.-O."/>
            <person name="Nomura Y."/>
            <person name="Togiya S."/>
            <person name="Komai F."/>
            <person name="Hara R."/>
            <person name="Takeuchi K."/>
            <person name="Arita M."/>
            <person name="Imose N."/>
            <person name="Musashino K."/>
            <person name="Yuuki H."/>
            <person name="Oshima A."/>
            <person name="Sasaki N."/>
            <person name="Aotsuka S."/>
            <person name="Yoshikawa Y."/>
            <person name="Matsunawa H."/>
            <person name="Ichihara T."/>
            <person name="Shiohata N."/>
            <person name="Sano S."/>
            <person name="Moriya S."/>
            <person name="Momiyama H."/>
            <person name="Satoh N."/>
            <person name="Takami S."/>
            <person name="Terashima Y."/>
            <person name="Suzuki O."/>
            <person name="Nakagawa S."/>
            <person name="Senoh A."/>
            <person name="Mizoguchi H."/>
            <person name="Goto Y."/>
            <person name="Shimizu F."/>
            <person name="Wakebe H."/>
            <person name="Hishigaki H."/>
            <person name="Watanabe T."/>
            <person name="Sugiyama A."/>
            <person name="Takemoto M."/>
            <person name="Kawakami B."/>
            <person name="Yamazaki M."/>
            <person name="Watanabe K."/>
            <person name="Kumagai A."/>
            <person name="Itakura S."/>
            <person name="Fukuzumi Y."/>
            <person name="Fujimori Y."/>
            <person name="Komiyama M."/>
            <person name="Tashiro H."/>
            <person name="Tanigami A."/>
            <person name="Fujiwara T."/>
            <person name="Ono T."/>
            <person name="Yamada K."/>
            <person name="Fujii Y."/>
            <person name="Ozaki K."/>
            <person name="Hirao M."/>
            <person name="Ohmori Y."/>
            <person name="Kawabata A."/>
            <person name="Hikiji T."/>
            <person name="Kobatake N."/>
            <person name="Inagaki H."/>
            <person name="Ikema Y."/>
            <person name="Okamoto S."/>
            <person name="Okitani R."/>
            <person name="Kawakami T."/>
            <person name="Noguchi S."/>
            <person name="Itoh T."/>
            <person name="Shigeta K."/>
            <person name="Senba T."/>
            <person name="Matsumura K."/>
            <person name="Nakajima Y."/>
            <person name="Mizuno T."/>
            <person name="Morinaga M."/>
            <person name="Sasaki M."/>
            <person name="Togashi T."/>
            <person name="Oyama M."/>
            <person name="Hata H."/>
            <person name="Watanabe M."/>
            <person name="Komatsu T."/>
            <person name="Mizushima-Sugano J."/>
            <person name="Satoh T."/>
            <person name="Shirai Y."/>
            <person name="Takahashi Y."/>
            <person name="Nakagawa K."/>
            <person name="Okumura K."/>
            <person name="Nagase T."/>
            <person name="Nomura N."/>
            <person name="Kikuchi H."/>
            <person name="Masuho Y."/>
            <person name="Yamashita R."/>
            <person name="Nakai K."/>
            <person name="Yada T."/>
            <person name="Nakamura Y."/>
            <person name="Ohara O."/>
            <person name="Isogai T."/>
            <person name="Sugano S."/>
        </authorList>
    </citation>
    <scope>NUCLEOTIDE SEQUENCE [LARGE SCALE MRNA] (ISOFORM 2)</scope>
    <source>
        <tissue>Kidney</tissue>
    </source>
</reference>
<reference key="3">
    <citation type="journal article" date="2005" name="Nature">
        <title>Generation and annotation of the DNA sequences of human chromosomes 2 and 4.</title>
        <authorList>
            <person name="Hillier L.W."/>
            <person name="Graves T.A."/>
            <person name="Fulton R.S."/>
            <person name="Fulton L.A."/>
            <person name="Pepin K.H."/>
            <person name="Minx P."/>
            <person name="Wagner-McPherson C."/>
            <person name="Layman D."/>
            <person name="Wylie K."/>
            <person name="Sekhon M."/>
            <person name="Becker M.C."/>
            <person name="Fewell G.A."/>
            <person name="Delehaunty K.D."/>
            <person name="Miner T.L."/>
            <person name="Nash W.E."/>
            <person name="Kremitzki C."/>
            <person name="Oddy L."/>
            <person name="Du H."/>
            <person name="Sun H."/>
            <person name="Bradshaw-Cordum H."/>
            <person name="Ali J."/>
            <person name="Carter J."/>
            <person name="Cordes M."/>
            <person name="Harris A."/>
            <person name="Isak A."/>
            <person name="van Brunt A."/>
            <person name="Nguyen C."/>
            <person name="Du F."/>
            <person name="Courtney L."/>
            <person name="Kalicki J."/>
            <person name="Ozersky P."/>
            <person name="Abbott S."/>
            <person name="Armstrong J."/>
            <person name="Belter E.A."/>
            <person name="Caruso L."/>
            <person name="Cedroni M."/>
            <person name="Cotton M."/>
            <person name="Davidson T."/>
            <person name="Desai A."/>
            <person name="Elliott G."/>
            <person name="Erb T."/>
            <person name="Fronick C."/>
            <person name="Gaige T."/>
            <person name="Haakenson W."/>
            <person name="Haglund K."/>
            <person name="Holmes A."/>
            <person name="Harkins R."/>
            <person name="Kim K."/>
            <person name="Kruchowski S.S."/>
            <person name="Strong C.M."/>
            <person name="Grewal N."/>
            <person name="Goyea E."/>
            <person name="Hou S."/>
            <person name="Levy A."/>
            <person name="Martinka S."/>
            <person name="Mead K."/>
            <person name="McLellan M.D."/>
            <person name="Meyer R."/>
            <person name="Randall-Maher J."/>
            <person name="Tomlinson C."/>
            <person name="Dauphin-Kohlberg S."/>
            <person name="Kozlowicz-Reilly A."/>
            <person name="Shah N."/>
            <person name="Swearengen-Shahid S."/>
            <person name="Snider J."/>
            <person name="Strong J.T."/>
            <person name="Thompson J."/>
            <person name="Yoakum M."/>
            <person name="Leonard S."/>
            <person name="Pearman C."/>
            <person name="Trani L."/>
            <person name="Radionenko M."/>
            <person name="Waligorski J.E."/>
            <person name="Wang C."/>
            <person name="Rock S.M."/>
            <person name="Tin-Wollam A.-M."/>
            <person name="Maupin R."/>
            <person name="Latreille P."/>
            <person name="Wendl M.C."/>
            <person name="Yang S.-P."/>
            <person name="Pohl C."/>
            <person name="Wallis J.W."/>
            <person name="Spieth J."/>
            <person name="Bieri T.A."/>
            <person name="Berkowicz N."/>
            <person name="Nelson J.O."/>
            <person name="Osborne J."/>
            <person name="Ding L."/>
            <person name="Meyer R."/>
            <person name="Sabo A."/>
            <person name="Shotland Y."/>
            <person name="Sinha P."/>
            <person name="Wohldmann P.E."/>
            <person name="Cook L.L."/>
            <person name="Hickenbotham M.T."/>
            <person name="Eldred J."/>
            <person name="Williams D."/>
            <person name="Jones T.A."/>
            <person name="She X."/>
            <person name="Ciccarelli F.D."/>
            <person name="Izaurralde E."/>
            <person name="Taylor J."/>
            <person name="Schmutz J."/>
            <person name="Myers R.M."/>
            <person name="Cox D.R."/>
            <person name="Huang X."/>
            <person name="McPherson J.D."/>
            <person name="Mardis E.R."/>
            <person name="Clifton S.W."/>
            <person name="Warren W.C."/>
            <person name="Chinwalla A.T."/>
            <person name="Eddy S.R."/>
            <person name="Marra M.A."/>
            <person name="Ovcharenko I."/>
            <person name="Furey T.S."/>
            <person name="Miller W."/>
            <person name="Eichler E.E."/>
            <person name="Bork P."/>
            <person name="Suyama M."/>
            <person name="Torrents D."/>
            <person name="Waterston R.H."/>
            <person name="Wilson R.K."/>
        </authorList>
    </citation>
    <scope>NUCLEOTIDE SEQUENCE [LARGE SCALE GENOMIC DNA]</scope>
    <source>
        <tissue>Brain</tissue>
    </source>
</reference>
<reference key="4">
    <citation type="journal article" date="2004" name="Genome Res.">
        <title>The status, quality, and expansion of the NIH full-length cDNA project: the Mammalian Gene Collection (MGC).</title>
        <authorList>
            <consortium name="The MGC Project Team"/>
        </authorList>
    </citation>
    <scope>NUCLEOTIDE SEQUENCE [LARGE SCALE MRNA] (ISOFORM 1)</scope>
    <source>
        <tissue>Brain</tissue>
    </source>
</reference>
<proteinExistence type="evidence at transcript level"/>
<gene>
    <name type="primary">LIMS3</name>
    <name type="synonym">PINCH3</name>
</gene>
<feature type="chain" id="PRO_0000266013" description="LIM and senescent cell antigen-like-containing domain protein 3">
    <location>
        <begin position="1"/>
        <end position="117"/>
    </location>
</feature>
<feature type="domain" description="LIM zinc-binding" evidence="1">
    <location>
        <begin position="70"/>
        <end position="117"/>
    </location>
</feature>
<feature type="splice variant" id="VSP_054392" description="In isoform 2." evidence="3">
    <original>ERT</original>
    <variation>FEGRKYCEHDFQMLFAPCCHQCGEFIIGRVIKAMNNSWHPECFRCDLCQEVLADIGFVKNAGRHLCRPCHNREKARGLGKYICQKCHAIIDEQPLIFKNDPYHPDHFNCANCGQEGSDCRCTGAERGAILPAMP</variation>
    <location>
        <begin position="115"/>
        <end position="117"/>
    </location>
</feature>
<dbReference type="EMBL" id="AF288404">
    <property type="protein sequence ID" value="AAF99328.1"/>
    <property type="molecule type" value="mRNA"/>
</dbReference>
<dbReference type="EMBL" id="AK298340">
    <property type="protein sequence ID" value="BAG60588.1"/>
    <property type="molecule type" value="mRNA"/>
</dbReference>
<dbReference type="EMBL" id="AK316210">
    <property type="protein sequence ID" value="BAH14581.1"/>
    <property type="molecule type" value="mRNA"/>
</dbReference>
<dbReference type="EMBL" id="AC013271">
    <property type="protein sequence ID" value="AAY14903.1"/>
    <property type="molecule type" value="Genomic_DNA"/>
</dbReference>
<dbReference type="EMBL" id="AC108938">
    <property type="status" value="NOT_ANNOTATED_CDS"/>
    <property type="molecule type" value="Genomic_DNA"/>
</dbReference>
<dbReference type="EMBL" id="AC112229">
    <property type="status" value="NOT_ANNOTATED_CDS"/>
    <property type="molecule type" value="Genomic_DNA"/>
</dbReference>
<dbReference type="EMBL" id="BC093812">
    <property type="protein sequence ID" value="AAH93812.1"/>
    <property type="molecule type" value="mRNA"/>
</dbReference>
<dbReference type="EMBL" id="BC112233">
    <property type="protein sequence ID" value="AAI12234.1"/>
    <property type="molecule type" value="mRNA"/>
</dbReference>
<dbReference type="CCDS" id="CCDS2084.1">
    <molecule id="P0CW19-1"/>
</dbReference>
<dbReference type="RefSeq" id="NP_001192217.1">
    <molecule id="P0CW19-1"/>
    <property type="nucleotide sequence ID" value="NM_001205288.1"/>
</dbReference>
<dbReference type="RefSeq" id="NP_277049.1">
    <molecule id="P0CW19-1"/>
    <property type="nucleotide sequence ID" value="NM_033514.5"/>
</dbReference>
<dbReference type="BMRB" id="P0CW19"/>
<dbReference type="SMR" id="P0CW19"/>
<dbReference type="BioGRID" id="125178">
    <property type="interactions" value="13"/>
</dbReference>
<dbReference type="BioGRID" id="940351">
    <property type="interactions" value="11"/>
</dbReference>
<dbReference type="FunCoup" id="P0CW19">
    <property type="interactions" value="3"/>
</dbReference>
<dbReference type="STRING" id="9606.ENSP00000404432"/>
<dbReference type="iPTMnet" id="P0CW19"/>
<dbReference type="PhosphoSitePlus" id="P0CW19"/>
<dbReference type="BioMuta" id="LIMS3"/>
<dbReference type="DMDM" id="334350997"/>
<dbReference type="jPOST" id="P0CW19"/>
<dbReference type="MassIVE" id="P0CW19"/>
<dbReference type="PaxDb" id="9606-ENSP00000404432"/>
<dbReference type="PeptideAtlas" id="P0CW19"/>
<dbReference type="ProteomicsDB" id="4785"/>
<dbReference type="Pumba" id="P0CW19"/>
<dbReference type="Antibodypedia" id="66681">
    <property type="antibodies" value="70 antibodies from 12 providers"/>
</dbReference>
<dbReference type="DNASU" id="96626"/>
<dbReference type="Ensembl" id="ENST00000437679.3">
    <molecule id="P0CW19-1"/>
    <property type="protein sequence ID" value="ENSP00000405165.2"/>
    <property type="gene ID" value="ENSG00000256977.13"/>
</dbReference>
<dbReference type="Ensembl" id="ENST00000631420.1">
    <molecule id="P0CW19-2"/>
    <property type="protein sequence ID" value="ENSP00000488227.1"/>
    <property type="gene ID" value="ENSG00000256977.13"/>
</dbReference>
<dbReference type="GeneID" id="96626"/>
<dbReference type="KEGG" id="hsa:100288695"/>
<dbReference type="KEGG" id="hsa:96626"/>
<dbReference type="AGR" id="HGNC:30047"/>
<dbReference type="AGR" id="HGNC:39941"/>
<dbReference type="CTD" id="100288695"/>
<dbReference type="CTD" id="96626"/>
<dbReference type="DisGeNET" id="96626"/>
<dbReference type="GeneCards" id="LIMS3"/>
<dbReference type="HGNC" id="HGNC:30047">
    <property type="gene designation" value="LIMS3"/>
</dbReference>
<dbReference type="HPA" id="ENSG00000256977">
    <property type="expression patterns" value="Tissue enhanced (skeletal)"/>
</dbReference>
<dbReference type="neXtProt" id="NX_P0CW19"/>
<dbReference type="OpenTargets" id="ENSG00000257207"/>
<dbReference type="PharmGKB" id="PA134917873"/>
<dbReference type="VEuPathDB" id="HostDB:ENSG00000256977"/>
<dbReference type="eggNOG" id="KOG2272">
    <property type="taxonomic scope" value="Eukaryota"/>
</dbReference>
<dbReference type="GeneTree" id="ENSGT00940000153518"/>
<dbReference type="HOGENOM" id="CLU_2084116_0_0_1"/>
<dbReference type="InParanoid" id="P0CW19"/>
<dbReference type="OMA" id="SSIRTCH"/>
<dbReference type="OrthoDB" id="20689at2759"/>
<dbReference type="PAN-GO" id="P0CW19">
    <property type="GO annotations" value="0 GO annotations based on evolutionary models"/>
</dbReference>
<dbReference type="TreeFam" id="TF314113"/>
<dbReference type="PathwayCommons" id="P0CW19"/>
<dbReference type="SignaLink" id="P0CW19"/>
<dbReference type="SIGNOR" id="P0CW19"/>
<dbReference type="BioGRID-ORCS" id="100288695">
    <property type="hits" value="117 hits in 658 CRISPR screens"/>
</dbReference>
<dbReference type="BioGRID-ORCS" id="96626">
    <property type="hits" value="215 hits in 958 CRISPR screens"/>
</dbReference>
<dbReference type="Pharos" id="P0CW19">
    <property type="development level" value="Tbio"/>
</dbReference>
<dbReference type="PRO" id="PR:P0CW19"/>
<dbReference type="Proteomes" id="UP000005640">
    <property type="component" value="Chromosome 2"/>
</dbReference>
<dbReference type="RNAct" id="P0CW19">
    <property type="molecule type" value="protein"/>
</dbReference>
<dbReference type="Bgee" id="ENSG00000256977">
    <property type="expression patterns" value="Expressed in endometrium and 101 other cell types or tissues"/>
</dbReference>
<dbReference type="ExpressionAtlas" id="P0CW19">
    <property type="expression patterns" value="baseline and differential"/>
</dbReference>
<dbReference type="GO" id="GO:0005737">
    <property type="term" value="C:cytoplasm"/>
    <property type="evidence" value="ECO:0007669"/>
    <property type="project" value="UniProtKB-SubCell"/>
</dbReference>
<dbReference type="GO" id="GO:0046872">
    <property type="term" value="F:metal ion binding"/>
    <property type="evidence" value="ECO:0007669"/>
    <property type="project" value="UniProtKB-KW"/>
</dbReference>
<dbReference type="Gene3D" id="2.10.110.10">
    <property type="entry name" value="Cysteine Rich Protein"/>
    <property type="match status" value="1"/>
</dbReference>
<dbReference type="InterPro" id="IPR017351">
    <property type="entry name" value="PINCH-1-4-like"/>
</dbReference>
<dbReference type="InterPro" id="IPR001781">
    <property type="entry name" value="Znf_LIM"/>
</dbReference>
<dbReference type="PANTHER" id="PTHR24210:SF12">
    <property type="entry name" value="LIM AND SENESCENT CELL ANTIGEN-LIKE-CONTAINING DOMAIN PROTEIN"/>
    <property type="match status" value="1"/>
</dbReference>
<dbReference type="PANTHER" id="PTHR24210">
    <property type="entry name" value="LIM DOMAIN-CONTAINING PROTEIN"/>
    <property type="match status" value="1"/>
</dbReference>
<dbReference type="Pfam" id="PF00412">
    <property type="entry name" value="LIM"/>
    <property type="match status" value="1"/>
</dbReference>
<dbReference type="SMART" id="SM00132">
    <property type="entry name" value="LIM"/>
    <property type="match status" value="1"/>
</dbReference>
<dbReference type="SUPFAM" id="SSF57716">
    <property type="entry name" value="Glucocorticoid receptor-like (DNA-binding domain)"/>
    <property type="match status" value="1"/>
</dbReference>
<dbReference type="PROSITE" id="PS00478">
    <property type="entry name" value="LIM_DOMAIN_1"/>
    <property type="match status" value="1"/>
</dbReference>
<dbReference type="PROSITE" id="PS50023">
    <property type="entry name" value="LIM_DOMAIN_2"/>
    <property type="match status" value="1"/>
</dbReference>
<comment type="subcellular location">
    <subcellularLocation>
        <location evidence="4">Cytoplasm</location>
    </subcellularLocation>
</comment>
<comment type="alternative products">
    <event type="alternative splicing"/>
    <isoform>
        <id>P0CW19-1</id>
        <name>1</name>
        <sequence type="displayed"/>
    </isoform>
    <isoform>
        <id>P0CW19-2</id>
        <name>2</name>
        <sequence type="described" ref="VSP_054392"/>
    </isoform>
</comment>
<comment type="tissue specificity">
    <text evidence="2">Detected in testis.</text>
</comment>
<evidence type="ECO:0000255" key="1">
    <source>
        <dbReference type="PROSITE-ProRule" id="PRU00125"/>
    </source>
</evidence>
<evidence type="ECO:0000269" key="2">
    <source ref="1"/>
</evidence>
<evidence type="ECO:0000303" key="3">
    <source>
    </source>
</evidence>
<evidence type="ECO:0000305" key="4"/>
<keyword id="KW-0025">Alternative splicing</keyword>
<keyword id="KW-0963">Cytoplasm</keyword>
<keyword id="KW-0440">LIM domain</keyword>
<keyword id="KW-0479">Metal-binding</keyword>
<keyword id="KW-1185">Reference proteome</keyword>
<keyword id="KW-0862">Zinc</keyword>